<organism>
    <name type="scientific">Arabidopsis thaliana</name>
    <name type="common">Mouse-ear cress</name>
    <dbReference type="NCBI Taxonomy" id="3702"/>
    <lineage>
        <taxon>Eukaryota</taxon>
        <taxon>Viridiplantae</taxon>
        <taxon>Streptophyta</taxon>
        <taxon>Embryophyta</taxon>
        <taxon>Tracheophyta</taxon>
        <taxon>Spermatophyta</taxon>
        <taxon>Magnoliopsida</taxon>
        <taxon>eudicotyledons</taxon>
        <taxon>Gunneridae</taxon>
        <taxon>Pentapetalae</taxon>
        <taxon>rosids</taxon>
        <taxon>malvids</taxon>
        <taxon>Brassicales</taxon>
        <taxon>Brassicaceae</taxon>
        <taxon>Camelineae</taxon>
        <taxon>Arabidopsis</taxon>
    </lineage>
</organism>
<dbReference type="EMBL" id="AF000657">
    <property type="protein sequence ID" value="AAB72173.1"/>
    <property type="status" value="ALT_SEQ"/>
    <property type="molecule type" value="Genomic_DNA"/>
</dbReference>
<dbReference type="EMBL" id="CP002684">
    <property type="protein sequence ID" value="AEE30297.2"/>
    <property type="molecule type" value="Genomic_DNA"/>
</dbReference>
<dbReference type="EMBL" id="AK229169">
    <property type="protein sequence ID" value="BAF01039.1"/>
    <property type="status" value="ALT_SEQ"/>
    <property type="molecule type" value="mRNA"/>
</dbReference>
<dbReference type="PIR" id="E86362">
    <property type="entry name" value="E86362"/>
</dbReference>
<dbReference type="RefSeq" id="NP_001319063.1">
    <property type="nucleotide sequence ID" value="NM_001332561.1"/>
</dbReference>
<dbReference type="SMR" id="F4I312"/>
<dbReference type="FunCoup" id="F4I312">
    <property type="interactions" value="1282"/>
</dbReference>
<dbReference type="STRING" id="3702.F4I312"/>
<dbReference type="PaxDb" id="3702-AT1G22860.1"/>
<dbReference type="ProteomicsDB" id="242778"/>
<dbReference type="EnsemblPlants" id="AT1G22860.1">
    <property type="protein sequence ID" value="AT1G22860.1"/>
    <property type="gene ID" value="AT1G22860"/>
</dbReference>
<dbReference type="GeneID" id="838891"/>
<dbReference type="Gramene" id="AT1G22860.1">
    <property type="protein sequence ID" value="AT1G22860.1"/>
    <property type="gene ID" value="AT1G22860"/>
</dbReference>
<dbReference type="KEGG" id="ath:AT1G22860"/>
<dbReference type="Araport" id="AT1G22860"/>
<dbReference type="TAIR" id="AT1G22860">
    <property type="gene designation" value="VPS3"/>
</dbReference>
<dbReference type="eggNOG" id="KOG2063">
    <property type="taxonomic scope" value="Eukaryota"/>
</dbReference>
<dbReference type="HOGENOM" id="CLU_009467_0_0_1"/>
<dbReference type="InParanoid" id="F4I312"/>
<dbReference type="OMA" id="QCLECYD"/>
<dbReference type="PRO" id="PR:F4I312"/>
<dbReference type="Proteomes" id="UP000006548">
    <property type="component" value="Chromosome 1"/>
</dbReference>
<dbReference type="ExpressionAtlas" id="F4I312">
    <property type="expression patterns" value="baseline and differential"/>
</dbReference>
<dbReference type="GO" id="GO:0033263">
    <property type="term" value="C:CORVET complex"/>
    <property type="evidence" value="ECO:0000314"/>
    <property type="project" value="UniProtKB"/>
</dbReference>
<dbReference type="GO" id="GO:0005737">
    <property type="term" value="C:cytoplasm"/>
    <property type="evidence" value="ECO:0000314"/>
    <property type="project" value="UniProtKB"/>
</dbReference>
<dbReference type="GO" id="GO:0010008">
    <property type="term" value="C:endosome membrane"/>
    <property type="evidence" value="ECO:0007669"/>
    <property type="project" value="UniProtKB-SubCell"/>
</dbReference>
<dbReference type="GO" id="GO:0015031">
    <property type="term" value="P:protein transport"/>
    <property type="evidence" value="ECO:0007669"/>
    <property type="project" value="UniProtKB-KW"/>
</dbReference>
<dbReference type="GO" id="GO:0010015">
    <property type="term" value="P:root morphogenesis"/>
    <property type="evidence" value="ECO:0000315"/>
    <property type="project" value="UniProtKB"/>
</dbReference>
<dbReference type="GO" id="GO:0016192">
    <property type="term" value="P:vesicle-mediated transport"/>
    <property type="evidence" value="ECO:0007669"/>
    <property type="project" value="InterPro"/>
</dbReference>
<dbReference type="InterPro" id="IPR001180">
    <property type="entry name" value="CNH_dom"/>
</dbReference>
<dbReference type="InterPro" id="IPR011047">
    <property type="entry name" value="Quinoprotein_ADH-like_sf"/>
</dbReference>
<dbReference type="InterPro" id="IPR032914">
    <property type="entry name" value="Vam6/VPS39/TRAP1"/>
</dbReference>
<dbReference type="InterPro" id="IPR019452">
    <property type="entry name" value="VPS39/TGF_beta_rcpt-assoc_1"/>
</dbReference>
<dbReference type="InterPro" id="IPR019453">
    <property type="entry name" value="VPS39/TGFA1_Znf"/>
</dbReference>
<dbReference type="PANTHER" id="PTHR12894">
    <property type="entry name" value="CNH DOMAIN CONTAINING"/>
    <property type="match status" value="1"/>
</dbReference>
<dbReference type="PANTHER" id="PTHR12894:SF43">
    <property type="entry name" value="VACUOLAR SORTING PROTEIN 3"/>
    <property type="match status" value="1"/>
</dbReference>
<dbReference type="Pfam" id="PF10366">
    <property type="entry name" value="Vps39_1"/>
    <property type="match status" value="1"/>
</dbReference>
<dbReference type="Pfam" id="PF10367">
    <property type="entry name" value="zf-Vps39_C"/>
    <property type="match status" value="1"/>
</dbReference>
<dbReference type="SUPFAM" id="SSF50998">
    <property type="entry name" value="Quinoprotein alcohol dehydrogenase-like"/>
    <property type="match status" value="1"/>
</dbReference>
<dbReference type="PROSITE" id="PS50219">
    <property type="entry name" value="CNH"/>
    <property type="match status" value="1"/>
</dbReference>
<accession>F4I312</accession>
<accession>O23136</accession>
<accession>Q0WPB0</accession>
<evidence type="ECO:0000250" key="1">
    <source>
        <dbReference type="UniProtKB" id="Q8WUH2"/>
    </source>
</evidence>
<evidence type="ECO:0000255" key="2">
    <source>
        <dbReference type="PROSITE-ProRule" id="PRU00795"/>
    </source>
</evidence>
<evidence type="ECO:0000255" key="3">
    <source>
        <dbReference type="PROSITE-ProRule" id="PRU01006"/>
    </source>
</evidence>
<evidence type="ECO:0000269" key="4">
    <source>
    </source>
</evidence>
<evidence type="ECO:0000303" key="5">
    <source>
    </source>
</evidence>
<evidence type="ECO:0000305" key="6"/>
<evidence type="ECO:0000312" key="7">
    <source>
        <dbReference type="Araport" id="AT1G22860"/>
    </source>
</evidence>
<evidence type="ECO:0000312" key="8">
    <source>
        <dbReference type="EMBL" id="AAB72173.1"/>
    </source>
</evidence>
<name>VPS3_ARATH</name>
<gene>
    <name evidence="5" type="primary">VPS3</name>
    <name evidence="7" type="ordered locus">At1g22860</name>
    <name evidence="8" type="ORF">F19G10.18</name>
</gene>
<keyword id="KW-0963">Cytoplasm</keyword>
<keyword id="KW-0967">Endosome</keyword>
<keyword id="KW-0472">Membrane</keyword>
<keyword id="KW-0653">Protein transport</keyword>
<keyword id="KW-1185">Reference proteome</keyword>
<keyword id="KW-0813">Transport</keyword>
<feature type="chain" id="PRO_0000444309" description="Vacuolar sorting protein 3">
    <location>
        <begin position="1"/>
        <end position="984"/>
    </location>
</feature>
<feature type="domain" description="CNH" evidence="2">
    <location>
        <begin position="21"/>
        <end position="339"/>
    </location>
</feature>
<feature type="repeat" description="CHCR" evidence="3">
    <location>
        <begin position="663"/>
        <end position="844"/>
    </location>
</feature>
<proteinExistence type="evidence at protein level"/>
<reference key="1">
    <citation type="journal article" date="2000" name="Nature">
        <title>Sequence and analysis of chromosome 1 of the plant Arabidopsis thaliana.</title>
        <authorList>
            <person name="Theologis A."/>
            <person name="Ecker J.R."/>
            <person name="Palm C.J."/>
            <person name="Federspiel N.A."/>
            <person name="Kaul S."/>
            <person name="White O."/>
            <person name="Alonso J."/>
            <person name="Altafi H."/>
            <person name="Araujo R."/>
            <person name="Bowman C.L."/>
            <person name="Brooks S.Y."/>
            <person name="Buehler E."/>
            <person name="Chan A."/>
            <person name="Chao Q."/>
            <person name="Chen H."/>
            <person name="Cheuk R.F."/>
            <person name="Chin C.W."/>
            <person name="Chung M.K."/>
            <person name="Conn L."/>
            <person name="Conway A.B."/>
            <person name="Conway A.R."/>
            <person name="Creasy T.H."/>
            <person name="Dewar K."/>
            <person name="Dunn P."/>
            <person name="Etgu P."/>
            <person name="Feldblyum T.V."/>
            <person name="Feng J.-D."/>
            <person name="Fong B."/>
            <person name="Fujii C.Y."/>
            <person name="Gill J.E."/>
            <person name="Goldsmith A.D."/>
            <person name="Haas B."/>
            <person name="Hansen N.F."/>
            <person name="Hughes B."/>
            <person name="Huizar L."/>
            <person name="Hunter J.L."/>
            <person name="Jenkins J."/>
            <person name="Johnson-Hopson C."/>
            <person name="Khan S."/>
            <person name="Khaykin E."/>
            <person name="Kim C.J."/>
            <person name="Koo H.L."/>
            <person name="Kremenetskaia I."/>
            <person name="Kurtz D.B."/>
            <person name="Kwan A."/>
            <person name="Lam B."/>
            <person name="Langin-Hooper S."/>
            <person name="Lee A."/>
            <person name="Lee J.M."/>
            <person name="Lenz C.A."/>
            <person name="Li J.H."/>
            <person name="Li Y.-P."/>
            <person name="Lin X."/>
            <person name="Liu S.X."/>
            <person name="Liu Z.A."/>
            <person name="Luros J.S."/>
            <person name="Maiti R."/>
            <person name="Marziali A."/>
            <person name="Militscher J."/>
            <person name="Miranda M."/>
            <person name="Nguyen M."/>
            <person name="Nierman W.C."/>
            <person name="Osborne B.I."/>
            <person name="Pai G."/>
            <person name="Peterson J."/>
            <person name="Pham P.K."/>
            <person name="Rizzo M."/>
            <person name="Rooney T."/>
            <person name="Rowley D."/>
            <person name="Sakano H."/>
            <person name="Salzberg S.L."/>
            <person name="Schwartz J.R."/>
            <person name="Shinn P."/>
            <person name="Southwick A.M."/>
            <person name="Sun H."/>
            <person name="Tallon L.J."/>
            <person name="Tambunga G."/>
            <person name="Toriumi M.J."/>
            <person name="Town C.D."/>
            <person name="Utterback T."/>
            <person name="Van Aken S."/>
            <person name="Vaysberg M."/>
            <person name="Vysotskaia V.S."/>
            <person name="Walker M."/>
            <person name="Wu D."/>
            <person name="Yu G."/>
            <person name="Fraser C.M."/>
            <person name="Venter J.C."/>
            <person name="Davis R.W."/>
        </authorList>
    </citation>
    <scope>NUCLEOTIDE SEQUENCE [LARGE SCALE GENOMIC DNA]</scope>
    <source>
        <strain>cv. Columbia</strain>
    </source>
</reference>
<reference key="2">
    <citation type="journal article" date="2017" name="Plant J.">
        <title>Araport11: a complete reannotation of the Arabidopsis thaliana reference genome.</title>
        <authorList>
            <person name="Cheng C.Y."/>
            <person name="Krishnakumar V."/>
            <person name="Chan A.P."/>
            <person name="Thibaud-Nissen F."/>
            <person name="Schobel S."/>
            <person name="Town C.D."/>
        </authorList>
    </citation>
    <scope>GENOME REANNOTATION</scope>
    <source>
        <strain>cv. Columbia</strain>
    </source>
</reference>
<reference key="3">
    <citation type="submission" date="2006-07" db="EMBL/GenBank/DDBJ databases">
        <title>Large-scale analysis of RIKEN Arabidopsis full-length (RAFL) cDNAs.</title>
        <authorList>
            <person name="Totoki Y."/>
            <person name="Seki M."/>
            <person name="Ishida J."/>
            <person name="Nakajima M."/>
            <person name="Enju A."/>
            <person name="Kamiya A."/>
            <person name="Narusaka M."/>
            <person name="Shin-i T."/>
            <person name="Nakagawa M."/>
            <person name="Sakamoto N."/>
            <person name="Oishi K."/>
            <person name="Kohara Y."/>
            <person name="Kobayashi M."/>
            <person name="Toyoda A."/>
            <person name="Sakaki Y."/>
            <person name="Sakurai T."/>
            <person name="Iida K."/>
            <person name="Akiyama K."/>
            <person name="Satou M."/>
            <person name="Toyoda T."/>
            <person name="Konagaya A."/>
            <person name="Carninci P."/>
            <person name="Kawai J."/>
            <person name="Hayashizaki Y."/>
            <person name="Shinozaki K."/>
        </authorList>
    </citation>
    <scope>NUCLEOTIDE SEQUENCE [LARGE SCALE MRNA] OF 676-984</scope>
    <source>
        <strain>cv. Columbia</strain>
    </source>
</reference>
<reference key="4">
    <citation type="journal article" date="2018" name="Proc. Natl. Acad. Sci. U.S.A.">
        <title>Distinct sets of tethering complexes, SNARE complexes, and Rab GTPases mediate membrane fusion at the vacuole in Arabidopsis.</title>
        <authorList>
            <person name="Takemoto K."/>
            <person name="Ebine K."/>
            <person name="Askani J.C."/>
            <person name="Krueger F."/>
            <person name="Gonzalez Z.A."/>
            <person name="Ito E."/>
            <person name="Goh T."/>
            <person name="Schumacher K."/>
            <person name="Nakano A."/>
            <person name="Ueda T."/>
        </authorList>
    </citation>
    <scope>FUNCTION</scope>
    <scope>DISRUPTION PHENOTYPE</scope>
    <scope>INTERACTION WITH VPS11; RABF2A AND RABF2B</scope>
    <scope>SUBUNIT</scope>
    <scope>IDENTIFICATION BY MASS SPECTROMETRY</scope>
    <scope>SUBCELLULAR LOCATION</scope>
</reference>
<comment type="function">
    <text evidence="1 4">Essential protein required during embryogenesis. Believed to act as a component of the putative class C core vacuole/endosome tethering (CORVET) endosomal tethering complexes. CORVET is required for vacuolar transport of SYP22. Involved in root development (PubMed:29463724). Plays a role in vesicle-mediated protein trafficking of the endocytic membrane transport pathway (By similarity).</text>
</comment>
<comment type="subunit">
    <text evidence="4">Component of the class C core vacuole/endosome tethering (CORVET) complex. Their common core is composed of the class C Vps core proteins VPS11, VCL1, VPS18 and VPS33, which in CORVET further associates with VPS3 (PubMed:29463724). Interacts directly with VPS11. Binds to RABF2A and RABF2B (PubMed:29463724).</text>
</comment>
<comment type="subcellular location">
    <subcellularLocation>
        <location evidence="1">Endosome membrane</location>
        <topology evidence="1">Peripheral membrane protein</topology>
        <orientation evidence="1">Cytoplasmic side</orientation>
    </subcellularLocation>
    <subcellularLocation>
        <location evidence="4">Cytoplasm</location>
    </subcellularLocation>
    <text evidence="4">Co-localizes with VAMP727, VPS18, RABG3F and RABF2B at cytoplasmic punctate structures.</text>
</comment>
<comment type="disruption phenotype">
    <text evidence="4">Embryonic lethality (PubMed:29463724). Heterozygous mutants produce some yellowish seeds with developmentally retarded or abnormally shaped embryos. Conditional dexamethasone (DEX)-inducible mutants exhibit abnormal root morphology (PubMed:29463724).</text>
</comment>
<comment type="similarity">
    <text evidence="6">Belongs to the TRAP1 family.</text>
</comment>
<comment type="sequence caution" evidence="6">
    <conflict type="erroneous gene model prediction">
        <sequence resource="EMBL-CDS" id="AAB72173"/>
    </conflict>
</comment>
<comment type="sequence caution" evidence="6">
    <conflict type="erroneous initiation">
        <sequence resource="EMBL-CDS" id="BAF01039"/>
    </conflict>
    <text>Truncated N-terminus.</text>
</comment>
<comment type="sequence caution" evidence="6">
    <conflict type="frameshift">
        <sequence resource="EMBL-CDS" id="BAF01039"/>
    </conflict>
</comment>
<sequence length="984" mass="109906">MSKSRAVVELTARFDLGGDDKIRALSLSPISDSQTLVYLGTYSGSLILLSLDTLTNTVSRLASVSLSPSPVESIFVLGEERGRVLALCNGYLFLLDSLLSQPAKRLGGLLKGINVIAKRVRGRDSSSTDLLPSEISTDSSSSKKFLQLLGAGNLVSDVRGNDSRHERVQQGHYVFAVAIGERMLLIELQCAEKEGLSGSFVVLKEILGIGGIKTLVWLDDYVIAGTVKGYSLISCVTGLSGVIFTLPDVSGPPLLKLLCKEWKVLLLVDNVGVVVDTNGQPIGGSLVFRRRPDSVGELSFYLVTVGDGKMEIHQKKSGACVQSVSFGPQGCGPSLLAADEAGDGNLLVVTTLSKLIFYRRVPYEEQIKDLLRKKRYRETISLVEELDSQGEISKDMLSFLHAQIGYLLLFDLRFEEAVNQFLKSEKMEPSEVFPFIMRDPNRWSLVVPRNRYWGLHPPPAPFEDVVDNGLMAIQRANFLRKAGMDTPVDEEFFSDPPSRADLLDSAIKNITRYLEISREKGLTLPVREGIDTLLMLLYRALNRVEDMENLASSGNNCVVEELETLLTESGHLRTLAFLYATKGMGAKALAIWRLFTKNYSSGLWQDSDDLVPYLHDNELIRLSGKEAAAAEAARILEEPCDPELALQHLSWIADVNPLFAIQVLTSDKRTEELSPEQVIQAIDPKKVEIIQRYFQWLIEERDYTDPQLHTSYALSLARSALECVEVQNGIQEADVPNGSEAHDSNVGSISLFEVDVRERLQAFLQSSDLYDPEEILELVEGSELWLEKAILYRRIGKETLVLQILALKLEDCAAAEQYCVEIGRPDAFMQLLDMYLDPQNGKEPMFKAAVRLLHNHGESLDPLQVLDKLSPDMPLKLASDTILRMLRARVHHHRQGQIVHNISRALDVDSRLARLEERSRHMQINDESLCDSCYARLGTKLFAMYPDDTIVCYKCYRRLGESKSVTGRDFKRDVLIKPGWLVNR</sequence>
<protein>
    <recommendedName>
        <fullName evidence="5">Vacuolar sorting protein 3</fullName>
    </recommendedName>
</protein>